<feature type="chain" id="PRO_0000167289" description="Small ribosomal subunit protein bS16">
    <location>
        <begin position="1"/>
        <end position="82"/>
    </location>
</feature>
<protein>
    <recommendedName>
        <fullName evidence="1">Small ribosomal subunit protein bS16</fullName>
    </recommendedName>
    <alternativeName>
        <fullName evidence="2">30S ribosomal protein S16</fullName>
    </alternativeName>
</protein>
<gene>
    <name evidence="1" type="primary">rpsP</name>
    <name type="ordered locus">YPO3295</name>
    <name type="ordered locus">y0894</name>
    <name type="ordered locus">YP_0391</name>
</gene>
<proteinExistence type="inferred from homology"/>
<reference key="1">
    <citation type="journal article" date="2001" name="Nature">
        <title>Genome sequence of Yersinia pestis, the causative agent of plague.</title>
        <authorList>
            <person name="Parkhill J."/>
            <person name="Wren B.W."/>
            <person name="Thomson N.R."/>
            <person name="Titball R.W."/>
            <person name="Holden M.T.G."/>
            <person name="Prentice M.B."/>
            <person name="Sebaihia M."/>
            <person name="James K.D."/>
            <person name="Churcher C.M."/>
            <person name="Mungall K.L."/>
            <person name="Baker S."/>
            <person name="Basham D."/>
            <person name="Bentley S.D."/>
            <person name="Brooks K."/>
            <person name="Cerdeno-Tarraga A.-M."/>
            <person name="Chillingworth T."/>
            <person name="Cronin A."/>
            <person name="Davies R.M."/>
            <person name="Davis P."/>
            <person name="Dougan G."/>
            <person name="Feltwell T."/>
            <person name="Hamlin N."/>
            <person name="Holroyd S."/>
            <person name="Jagels K."/>
            <person name="Karlyshev A.V."/>
            <person name="Leather S."/>
            <person name="Moule S."/>
            <person name="Oyston P.C.F."/>
            <person name="Quail M.A."/>
            <person name="Rutherford K.M."/>
            <person name="Simmonds M."/>
            <person name="Skelton J."/>
            <person name="Stevens K."/>
            <person name="Whitehead S."/>
            <person name="Barrell B.G."/>
        </authorList>
    </citation>
    <scope>NUCLEOTIDE SEQUENCE [LARGE SCALE GENOMIC DNA]</scope>
    <source>
        <strain>CO-92 / Biovar Orientalis</strain>
    </source>
</reference>
<reference key="2">
    <citation type="journal article" date="2002" name="J. Bacteriol.">
        <title>Genome sequence of Yersinia pestis KIM.</title>
        <authorList>
            <person name="Deng W."/>
            <person name="Burland V."/>
            <person name="Plunkett G. III"/>
            <person name="Boutin A."/>
            <person name="Mayhew G.F."/>
            <person name="Liss P."/>
            <person name="Perna N.T."/>
            <person name="Rose D.J."/>
            <person name="Mau B."/>
            <person name="Zhou S."/>
            <person name="Schwartz D.C."/>
            <person name="Fetherston J.D."/>
            <person name="Lindler L.E."/>
            <person name="Brubaker R.R."/>
            <person name="Plano G.V."/>
            <person name="Straley S.C."/>
            <person name="McDonough K.A."/>
            <person name="Nilles M.L."/>
            <person name="Matson J.S."/>
            <person name="Blattner F.R."/>
            <person name="Perry R.D."/>
        </authorList>
    </citation>
    <scope>NUCLEOTIDE SEQUENCE [LARGE SCALE GENOMIC DNA]</scope>
    <source>
        <strain>KIM10+ / Biovar Mediaevalis</strain>
    </source>
</reference>
<reference key="3">
    <citation type="journal article" date="2004" name="DNA Res.">
        <title>Complete genome sequence of Yersinia pestis strain 91001, an isolate avirulent to humans.</title>
        <authorList>
            <person name="Song Y."/>
            <person name="Tong Z."/>
            <person name="Wang J."/>
            <person name="Wang L."/>
            <person name="Guo Z."/>
            <person name="Han Y."/>
            <person name="Zhang J."/>
            <person name="Pei D."/>
            <person name="Zhou D."/>
            <person name="Qin H."/>
            <person name="Pang X."/>
            <person name="Han Y."/>
            <person name="Zhai J."/>
            <person name="Li M."/>
            <person name="Cui B."/>
            <person name="Qi Z."/>
            <person name="Jin L."/>
            <person name="Dai R."/>
            <person name="Chen F."/>
            <person name="Li S."/>
            <person name="Ye C."/>
            <person name="Du Z."/>
            <person name="Lin W."/>
            <person name="Wang J."/>
            <person name="Yu J."/>
            <person name="Yang H."/>
            <person name="Wang J."/>
            <person name="Huang P."/>
            <person name="Yang R."/>
        </authorList>
    </citation>
    <scope>NUCLEOTIDE SEQUENCE [LARGE SCALE GENOMIC DNA]</scope>
    <source>
        <strain>91001 / Biovar Mediaevalis</strain>
    </source>
</reference>
<evidence type="ECO:0000255" key="1">
    <source>
        <dbReference type="HAMAP-Rule" id="MF_00385"/>
    </source>
</evidence>
<evidence type="ECO:0000305" key="2"/>
<accession>Q8ZBU7</accession>
<accession>Q0WBZ7</accession>
<sequence length="82" mass="9097">MVTIRLARGGAKKRPFYQVVVTDSRNARDGRFIERVGFFNPIASGQAEALRLDLDRIEHWIGLGATVSDRVSVLIKDAKKAA</sequence>
<name>RS16_YERPE</name>
<keyword id="KW-1185">Reference proteome</keyword>
<keyword id="KW-0687">Ribonucleoprotein</keyword>
<keyword id="KW-0689">Ribosomal protein</keyword>
<dbReference type="EMBL" id="AL590842">
    <property type="protein sequence ID" value="CAL21886.1"/>
    <property type="molecule type" value="Genomic_DNA"/>
</dbReference>
<dbReference type="EMBL" id="AE009952">
    <property type="protein sequence ID" value="AAM84478.1"/>
    <property type="molecule type" value="Genomic_DNA"/>
</dbReference>
<dbReference type="EMBL" id="AE017042">
    <property type="protein sequence ID" value="AAS60664.1"/>
    <property type="molecule type" value="Genomic_DNA"/>
</dbReference>
<dbReference type="PIR" id="AC0400">
    <property type="entry name" value="AC0400"/>
</dbReference>
<dbReference type="RefSeq" id="WP_002209458.1">
    <property type="nucleotide sequence ID" value="NZ_WUCM01000135.1"/>
</dbReference>
<dbReference type="RefSeq" id="YP_002348191.1">
    <property type="nucleotide sequence ID" value="NC_003143.1"/>
</dbReference>
<dbReference type="SMR" id="Q8ZBU7"/>
<dbReference type="STRING" id="214092.YPO3295"/>
<dbReference type="PaxDb" id="214092-YPO3295"/>
<dbReference type="DNASU" id="1145841"/>
<dbReference type="EnsemblBacteria" id="AAS60664">
    <property type="protein sequence ID" value="AAS60664"/>
    <property type="gene ID" value="YP_0391"/>
</dbReference>
<dbReference type="GeneID" id="96664341"/>
<dbReference type="KEGG" id="ype:YPO3295"/>
<dbReference type="KEGG" id="ypk:y0894"/>
<dbReference type="KEGG" id="ypm:YP_0391"/>
<dbReference type="PATRIC" id="fig|214092.21.peg.3764"/>
<dbReference type="eggNOG" id="COG0228">
    <property type="taxonomic scope" value="Bacteria"/>
</dbReference>
<dbReference type="HOGENOM" id="CLU_100590_5_1_6"/>
<dbReference type="OMA" id="GFYNPIA"/>
<dbReference type="OrthoDB" id="9807878at2"/>
<dbReference type="Proteomes" id="UP000000815">
    <property type="component" value="Chromosome"/>
</dbReference>
<dbReference type="Proteomes" id="UP000001019">
    <property type="component" value="Chromosome"/>
</dbReference>
<dbReference type="Proteomes" id="UP000002490">
    <property type="component" value="Chromosome"/>
</dbReference>
<dbReference type="GO" id="GO:0005737">
    <property type="term" value="C:cytoplasm"/>
    <property type="evidence" value="ECO:0007669"/>
    <property type="project" value="UniProtKB-ARBA"/>
</dbReference>
<dbReference type="GO" id="GO:0015935">
    <property type="term" value="C:small ribosomal subunit"/>
    <property type="evidence" value="ECO:0000318"/>
    <property type="project" value="GO_Central"/>
</dbReference>
<dbReference type="GO" id="GO:0003735">
    <property type="term" value="F:structural constituent of ribosome"/>
    <property type="evidence" value="ECO:0000318"/>
    <property type="project" value="GO_Central"/>
</dbReference>
<dbReference type="GO" id="GO:0006412">
    <property type="term" value="P:translation"/>
    <property type="evidence" value="ECO:0007669"/>
    <property type="project" value="UniProtKB-UniRule"/>
</dbReference>
<dbReference type="FunFam" id="3.30.1320.10:FF:000001">
    <property type="entry name" value="30S ribosomal protein S16"/>
    <property type="match status" value="1"/>
</dbReference>
<dbReference type="Gene3D" id="3.30.1320.10">
    <property type="match status" value="1"/>
</dbReference>
<dbReference type="HAMAP" id="MF_00385">
    <property type="entry name" value="Ribosomal_bS16"/>
    <property type="match status" value="1"/>
</dbReference>
<dbReference type="InterPro" id="IPR000307">
    <property type="entry name" value="Ribosomal_bS16"/>
</dbReference>
<dbReference type="InterPro" id="IPR020592">
    <property type="entry name" value="Ribosomal_bS16_CS"/>
</dbReference>
<dbReference type="InterPro" id="IPR023803">
    <property type="entry name" value="Ribosomal_bS16_dom_sf"/>
</dbReference>
<dbReference type="NCBIfam" id="TIGR00002">
    <property type="entry name" value="S16"/>
    <property type="match status" value="1"/>
</dbReference>
<dbReference type="PANTHER" id="PTHR12919">
    <property type="entry name" value="30S RIBOSOMAL PROTEIN S16"/>
    <property type="match status" value="1"/>
</dbReference>
<dbReference type="PANTHER" id="PTHR12919:SF20">
    <property type="entry name" value="SMALL RIBOSOMAL SUBUNIT PROTEIN BS16M"/>
    <property type="match status" value="1"/>
</dbReference>
<dbReference type="Pfam" id="PF00886">
    <property type="entry name" value="Ribosomal_S16"/>
    <property type="match status" value="1"/>
</dbReference>
<dbReference type="SUPFAM" id="SSF54565">
    <property type="entry name" value="Ribosomal protein S16"/>
    <property type="match status" value="1"/>
</dbReference>
<dbReference type="PROSITE" id="PS00732">
    <property type="entry name" value="RIBOSOMAL_S16"/>
    <property type="match status" value="1"/>
</dbReference>
<comment type="similarity">
    <text evidence="1">Belongs to the bacterial ribosomal protein bS16 family.</text>
</comment>
<organism>
    <name type="scientific">Yersinia pestis</name>
    <dbReference type="NCBI Taxonomy" id="632"/>
    <lineage>
        <taxon>Bacteria</taxon>
        <taxon>Pseudomonadati</taxon>
        <taxon>Pseudomonadota</taxon>
        <taxon>Gammaproteobacteria</taxon>
        <taxon>Enterobacterales</taxon>
        <taxon>Yersiniaceae</taxon>
        <taxon>Yersinia</taxon>
    </lineage>
</organism>